<feature type="chain" id="PRO_0000201622" description="Probable cytochrome c biosynthesis protein">
    <location>
        <begin position="1"/>
        <end position="577"/>
    </location>
</feature>
<reference key="1">
    <citation type="journal article" date="1993" name="Mol. Gen. Genet.">
        <title>A plant mitochondrial gene encodes a protein involved in cytochrome c biogenesis.</title>
        <authorList>
            <person name="Schuster W."/>
            <person name="Combettes B."/>
            <person name="Flieger K."/>
            <person name="Brennicke A."/>
        </authorList>
    </citation>
    <scope>NUCLEOTIDE SEQUENCE [GENOMIC DNA]</scope>
    <scope>RNA EDITING</scope>
</reference>
<proteinExistence type="evidence at transcript level"/>
<name>CCBS_OENBE</name>
<comment type="function">
    <text>Could be involved in assembly and maturation of cytochromes c. May play a role in guidance of apocytochromes and heme groups for the covalent linkage introduced by the cytochrome-c-heme lyase.</text>
</comment>
<comment type="subcellular location">
    <subcellularLocation>
        <location evidence="2">Mitochondrion</location>
    </subcellularLocation>
</comment>
<comment type="RNA editing">
    <location>
        <position position="10" evidence="1"/>
    </location>
    <location>
        <position position="13" evidence="1"/>
    </location>
    <location>
        <position position="33" evidence="1"/>
    </location>
    <location>
        <position position="46" evidence="1"/>
    </location>
    <location>
        <position position="48" evidence="1"/>
    </location>
    <location>
        <position position="51" evidence="1"/>
    </location>
    <location>
        <position position="86" evidence="1"/>
    </location>
    <location>
        <position position="88" evidence="1"/>
    </location>
    <location>
        <position position="106" evidence="1"/>
    </location>
    <location>
        <position position="112" evidence="1"/>
    </location>
    <location>
        <position position="119" evidence="1"/>
    </location>
    <location>
        <position position="128" evidence="1"/>
    </location>
    <location>
        <position position="133" evidence="1"/>
    </location>
    <location>
        <position position="134" evidence="1"/>
    </location>
    <location>
        <position position="142" evidence="1"/>
    </location>
    <location>
        <position position="160" evidence="1"/>
    </location>
    <location>
        <position position="187" evidence="1"/>
    </location>
    <location>
        <position position="203" evidence="1"/>
    </location>
    <location>
        <position position="236" evidence="1"/>
    </location>
    <location>
        <position position="239" evidence="1"/>
    </location>
    <location>
        <position position="244" evidence="1"/>
    </location>
    <location>
        <position position="252" evidence="1"/>
    </location>
    <location>
        <position position="259" evidence="1"/>
    </location>
    <location>
        <position position="263" evidence="1"/>
    </location>
    <location>
        <position position="268" evidence="1"/>
    </location>
    <location>
        <position position="306" evidence="1"/>
    </location>
    <location>
        <position position="325" evidence="1"/>
    </location>
    <location>
        <position position="368" evidence="1"/>
    </location>
    <location>
        <position position="424" evidence="1"/>
    </location>
    <location>
        <position position="433" evidence="1"/>
    </location>
    <location>
        <position position="439" evidence="1"/>
    </location>
    <location>
        <position position="444" evidence="1"/>
    </location>
    <location>
        <position position="450" evidence="1"/>
    </location>
    <location>
        <position position="461" evidence="1"/>
    </location>
    <location>
        <position position="467" evidence="1"/>
    </location>
    <location>
        <position position="481" evidence="1"/>
    </location>
    <location>
        <position position="488" evidence="1"/>
    </location>
</comment>
<comment type="similarity">
    <text evidence="2">Belongs to the CcmF/CycK/Ccl1/NrfE/CcsA family.</text>
</comment>
<dbReference type="EMBL" id="X69555">
    <property type="protein sequence ID" value="CAA49287.1"/>
    <property type="status" value="ALT_SEQ"/>
    <property type="molecule type" value="Genomic_DNA"/>
</dbReference>
<dbReference type="PIR" id="S77715">
    <property type="entry name" value="S77715"/>
</dbReference>
<dbReference type="GO" id="GO:0016020">
    <property type="term" value="C:membrane"/>
    <property type="evidence" value="ECO:0007669"/>
    <property type="project" value="InterPro"/>
</dbReference>
<dbReference type="GO" id="GO:0005739">
    <property type="term" value="C:mitochondrion"/>
    <property type="evidence" value="ECO:0007669"/>
    <property type="project" value="UniProtKB-SubCell"/>
</dbReference>
<dbReference type="GO" id="GO:0020037">
    <property type="term" value="F:heme binding"/>
    <property type="evidence" value="ECO:0007669"/>
    <property type="project" value="InterPro"/>
</dbReference>
<dbReference type="GO" id="GO:0015232">
    <property type="term" value="F:heme transmembrane transporter activity"/>
    <property type="evidence" value="ECO:0007669"/>
    <property type="project" value="InterPro"/>
</dbReference>
<dbReference type="GO" id="GO:0017004">
    <property type="term" value="P:cytochrome complex assembly"/>
    <property type="evidence" value="ECO:0007669"/>
    <property type="project" value="UniProtKB-KW"/>
</dbReference>
<dbReference type="InterPro" id="IPR002541">
    <property type="entry name" value="Cyt_c_assembly"/>
</dbReference>
<dbReference type="InterPro" id="IPR003567">
    <property type="entry name" value="Cyt_c_biogenesis"/>
</dbReference>
<dbReference type="InterPro" id="IPR003569">
    <property type="entry name" value="Cyt_c_biogenesis_plant"/>
</dbReference>
<dbReference type="PANTHER" id="PTHR43653">
    <property type="entry name" value="CYTOCHROME C ASSEMBLY PROTEIN-RELATED"/>
    <property type="match status" value="1"/>
</dbReference>
<dbReference type="PANTHER" id="PTHR43653:SF1">
    <property type="entry name" value="CYTOCHROME C-TYPE BIOGENESIS PROTEIN CCMF"/>
    <property type="match status" value="1"/>
</dbReference>
<dbReference type="Pfam" id="PF01578">
    <property type="entry name" value="Cytochrom_C_asm"/>
    <property type="match status" value="1"/>
</dbReference>
<dbReference type="PIRSF" id="PIRSF005240">
    <property type="entry name" value="Cytc_biog_CcbS"/>
    <property type="match status" value="1"/>
</dbReference>
<dbReference type="PRINTS" id="PR01410">
    <property type="entry name" value="CCBIOGENESIS"/>
</dbReference>
<dbReference type="PRINTS" id="PR01412">
    <property type="entry name" value="CCBSBIOGNSIS"/>
</dbReference>
<geneLocation type="mitochondrion"/>
<evidence type="ECO:0000269" key="1">
    <source>
    </source>
</evidence>
<evidence type="ECO:0000305" key="2"/>
<protein>
    <recommendedName>
        <fullName>Probable cytochrome c biosynthesis protein</fullName>
    </recommendedName>
</protein>
<sequence length="577" mass="65729">MSIVELFHYSLFLGLFVAFTYNKKEPPAFGAALAFWCILLSFLGLLFCHISNNNSNYNVLTANAPFFYQISGTWSNHEGSILLWCWILSFYGFLLCYRGRPQSHNVSKRGGYRETFFYFFVLNFVKNFILSLLCYEQKTLAVPQLYTPFVLRTLVDSELCSRRNRTFDGPALFYAPLYPERKMSFAFLGARLPVVRGEGKRTYLLLHLARDDKERASSIDEQRIDGALGIALFFSFFLLASSDFFVRNFFVCTEPLAELNPVLQDPILAIHPPCIYAGDVASAMGFCLCRSKMMNGIVALHSPPMWKDAAEKNGRLLCSAGCVGFRITSELFTLKFKDVGAKCYPALLLRSNRSPLMLLRRRFFAFSLLWTGALVDTGREQAKRVVRNGKKDTATSPLSWTAGANTVVSDQDQEPIRIWILTCWCFLNVGILLGSWWAYHELGWGGWWFWDPVENASFMPWVLATACIHSVILPLLHSCTLLINIVTFLCCVLGTFSIRSGLLASVHSFATDDTRGIFLWRFFLLMTGISMILFSQMKQQASVRRTYQKEMVVARSTLVHLRHSARAQPRPQLLWKN</sequence>
<accession>Q04648</accession>
<keyword id="KW-0201">Cytochrome c-type biogenesis</keyword>
<keyword id="KW-0496">Mitochondrion</keyword>
<keyword id="KW-0691">RNA editing</keyword>
<organism>
    <name type="scientific">Oenothera berteroana</name>
    <name type="common">Bertero's evening primrose</name>
    <dbReference type="NCBI Taxonomy" id="3950"/>
    <lineage>
        <taxon>Eukaryota</taxon>
        <taxon>Viridiplantae</taxon>
        <taxon>Streptophyta</taxon>
        <taxon>Embryophyta</taxon>
        <taxon>Tracheophyta</taxon>
        <taxon>Spermatophyta</taxon>
        <taxon>Magnoliopsida</taxon>
        <taxon>eudicotyledons</taxon>
        <taxon>Gunneridae</taxon>
        <taxon>Pentapetalae</taxon>
        <taxon>rosids</taxon>
        <taxon>malvids</taxon>
        <taxon>Myrtales</taxon>
        <taxon>Onagraceae</taxon>
        <taxon>Onagroideae</taxon>
        <taxon>Onagreae</taxon>
        <taxon>Oenothera</taxon>
    </lineage>
</organism>